<organism>
    <name type="scientific">Rhizobium leguminosarum bv. trifolii (strain WSM2304)</name>
    <dbReference type="NCBI Taxonomy" id="395492"/>
    <lineage>
        <taxon>Bacteria</taxon>
        <taxon>Pseudomonadati</taxon>
        <taxon>Pseudomonadota</taxon>
        <taxon>Alphaproteobacteria</taxon>
        <taxon>Hyphomicrobiales</taxon>
        <taxon>Rhizobiaceae</taxon>
        <taxon>Rhizobium/Agrobacterium group</taxon>
        <taxon>Rhizobium</taxon>
    </lineage>
</organism>
<dbReference type="EMBL" id="CP001191">
    <property type="protein sequence ID" value="ACI57245.1"/>
    <property type="molecule type" value="Genomic_DNA"/>
</dbReference>
<dbReference type="RefSeq" id="WP_012559424.1">
    <property type="nucleotide sequence ID" value="NC_011369.1"/>
</dbReference>
<dbReference type="SMR" id="B5ZV99"/>
<dbReference type="STRING" id="395492.Rleg2_3983"/>
<dbReference type="KEGG" id="rlt:Rleg2_3983"/>
<dbReference type="eggNOG" id="COG1220">
    <property type="taxonomic scope" value="Bacteria"/>
</dbReference>
<dbReference type="HOGENOM" id="CLU_033123_0_0_5"/>
<dbReference type="Proteomes" id="UP000008330">
    <property type="component" value="Chromosome"/>
</dbReference>
<dbReference type="GO" id="GO:0009376">
    <property type="term" value="C:HslUV protease complex"/>
    <property type="evidence" value="ECO:0007669"/>
    <property type="project" value="UniProtKB-UniRule"/>
</dbReference>
<dbReference type="GO" id="GO:0005524">
    <property type="term" value="F:ATP binding"/>
    <property type="evidence" value="ECO:0007669"/>
    <property type="project" value="UniProtKB-UniRule"/>
</dbReference>
<dbReference type="GO" id="GO:0016887">
    <property type="term" value="F:ATP hydrolysis activity"/>
    <property type="evidence" value="ECO:0007669"/>
    <property type="project" value="InterPro"/>
</dbReference>
<dbReference type="GO" id="GO:0008233">
    <property type="term" value="F:peptidase activity"/>
    <property type="evidence" value="ECO:0007669"/>
    <property type="project" value="InterPro"/>
</dbReference>
<dbReference type="GO" id="GO:0036402">
    <property type="term" value="F:proteasome-activating activity"/>
    <property type="evidence" value="ECO:0007669"/>
    <property type="project" value="UniProtKB-UniRule"/>
</dbReference>
<dbReference type="GO" id="GO:0043335">
    <property type="term" value="P:protein unfolding"/>
    <property type="evidence" value="ECO:0007669"/>
    <property type="project" value="UniProtKB-UniRule"/>
</dbReference>
<dbReference type="GO" id="GO:0051603">
    <property type="term" value="P:proteolysis involved in protein catabolic process"/>
    <property type="evidence" value="ECO:0007669"/>
    <property type="project" value="TreeGrafter"/>
</dbReference>
<dbReference type="CDD" id="cd19498">
    <property type="entry name" value="RecA-like_HslU"/>
    <property type="match status" value="1"/>
</dbReference>
<dbReference type="FunFam" id="3.40.50.300:FF:000213">
    <property type="entry name" value="ATP-dependent protease ATPase subunit HslU"/>
    <property type="match status" value="1"/>
</dbReference>
<dbReference type="FunFam" id="3.40.50.300:FF:000220">
    <property type="entry name" value="ATP-dependent protease ATPase subunit HslU"/>
    <property type="match status" value="1"/>
</dbReference>
<dbReference type="Gene3D" id="1.10.8.60">
    <property type="match status" value="1"/>
</dbReference>
<dbReference type="Gene3D" id="1.10.8.10">
    <property type="entry name" value="DNA helicase RuvA subunit, C-terminal domain"/>
    <property type="match status" value="1"/>
</dbReference>
<dbReference type="Gene3D" id="3.40.50.300">
    <property type="entry name" value="P-loop containing nucleotide triphosphate hydrolases"/>
    <property type="match status" value="2"/>
</dbReference>
<dbReference type="HAMAP" id="MF_00249">
    <property type="entry name" value="HslU"/>
    <property type="match status" value="1"/>
</dbReference>
<dbReference type="InterPro" id="IPR003593">
    <property type="entry name" value="AAA+_ATPase"/>
</dbReference>
<dbReference type="InterPro" id="IPR050052">
    <property type="entry name" value="ATP-dep_Clp_protease_ClpX"/>
</dbReference>
<dbReference type="InterPro" id="IPR003959">
    <property type="entry name" value="ATPase_AAA_core"/>
</dbReference>
<dbReference type="InterPro" id="IPR019489">
    <property type="entry name" value="Clp_ATPase_C"/>
</dbReference>
<dbReference type="InterPro" id="IPR004491">
    <property type="entry name" value="HslU"/>
</dbReference>
<dbReference type="InterPro" id="IPR027417">
    <property type="entry name" value="P-loop_NTPase"/>
</dbReference>
<dbReference type="NCBIfam" id="TIGR00390">
    <property type="entry name" value="hslU"/>
    <property type="match status" value="1"/>
</dbReference>
<dbReference type="NCBIfam" id="NF003544">
    <property type="entry name" value="PRK05201.1"/>
    <property type="match status" value="1"/>
</dbReference>
<dbReference type="PANTHER" id="PTHR48102">
    <property type="entry name" value="ATP-DEPENDENT CLP PROTEASE ATP-BINDING SUBUNIT CLPX-LIKE, MITOCHONDRIAL-RELATED"/>
    <property type="match status" value="1"/>
</dbReference>
<dbReference type="PANTHER" id="PTHR48102:SF3">
    <property type="entry name" value="ATP-DEPENDENT PROTEASE ATPASE SUBUNIT HSLU"/>
    <property type="match status" value="1"/>
</dbReference>
<dbReference type="Pfam" id="PF00004">
    <property type="entry name" value="AAA"/>
    <property type="match status" value="1"/>
</dbReference>
<dbReference type="Pfam" id="PF07724">
    <property type="entry name" value="AAA_2"/>
    <property type="match status" value="1"/>
</dbReference>
<dbReference type="SMART" id="SM00382">
    <property type="entry name" value="AAA"/>
    <property type="match status" value="1"/>
</dbReference>
<dbReference type="SMART" id="SM01086">
    <property type="entry name" value="ClpB_D2-small"/>
    <property type="match status" value="1"/>
</dbReference>
<dbReference type="SUPFAM" id="SSF52540">
    <property type="entry name" value="P-loop containing nucleoside triphosphate hydrolases"/>
    <property type="match status" value="1"/>
</dbReference>
<protein>
    <recommendedName>
        <fullName evidence="1">ATP-dependent protease ATPase subunit HslU</fullName>
    </recommendedName>
    <alternativeName>
        <fullName evidence="1">Unfoldase HslU</fullName>
    </alternativeName>
</protein>
<name>HSLU_RHILW</name>
<evidence type="ECO:0000255" key="1">
    <source>
        <dbReference type="HAMAP-Rule" id="MF_00249"/>
    </source>
</evidence>
<feature type="chain" id="PRO_1000100965" description="ATP-dependent protease ATPase subunit HslU">
    <location>
        <begin position="1"/>
        <end position="435"/>
    </location>
</feature>
<feature type="binding site" evidence="1">
    <location>
        <position position="18"/>
    </location>
    <ligand>
        <name>ATP</name>
        <dbReference type="ChEBI" id="CHEBI:30616"/>
    </ligand>
</feature>
<feature type="binding site" evidence="1">
    <location>
        <begin position="60"/>
        <end position="65"/>
    </location>
    <ligand>
        <name>ATP</name>
        <dbReference type="ChEBI" id="CHEBI:30616"/>
    </ligand>
</feature>
<feature type="binding site" evidence="1">
    <location>
        <position position="248"/>
    </location>
    <ligand>
        <name>ATP</name>
        <dbReference type="ChEBI" id="CHEBI:30616"/>
    </ligand>
</feature>
<feature type="binding site" evidence="1">
    <location>
        <position position="313"/>
    </location>
    <ligand>
        <name>ATP</name>
        <dbReference type="ChEBI" id="CHEBI:30616"/>
    </ligand>
</feature>
<feature type="binding site" evidence="1">
    <location>
        <position position="385"/>
    </location>
    <ligand>
        <name>ATP</name>
        <dbReference type="ChEBI" id="CHEBI:30616"/>
    </ligand>
</feature>
<keyword id="KW-0067">ATP-binding</keyword>
<keyword id="KW-0143">Chaperone</keyword>
<keyword id="KW-0963">Cytoplasm</keyword>
<keyword id="KW-0547">Nucleotide-binding</keyword>
<keyword id="KW-1185">Reference proteome</keyword>
<keyword id="KW-0346">Stress response</keyword>
<accession>B5ZV99</accession>
<reference key="1">
    <citation type="journal article" date="2010" name="Stand. Genomic Sci.">
        <title>Complete genome sequence of Rhizobium leguminosarum bv trifolii strain WSM2304, an effective microsymbiont of the South American clover Trifolium polymorphum.</title>
        <authorList>
            <person name="Reeve W."/>
            <person name="O'Hara G."/>
            <person name="Chain P."/>
            <person name="Ardley J."/>
            <person name="Brau L."/>
            <person name="Nandesena K."/>
            <person name="Tiwari R."/>
            <person name="Malfatti S."/>
            <person name="Kiss H."/>
            <person name="Lapidus A."/>
            <person name="Copeland A."/>
            <person name="Nolan M."/>
            <person name="Land M."/>
            <person name="Ivanova N."/>
            <person name="Mavromatis K."/>
            <person name="Markowitz V."/>
            <person name="Kyrpides N."/>
            <person name="Melino V."/>
            <person name="Denton M."/>
            <person name="Yates R."/>
            <person name="Howieson J."/>
        </authorList>
    </citation>
    <scope>NUCLEOTIDE SEQUENCE [LARGE SCALE GENOMIC DNA]</scope>
    <source>
        <strain>WSM2304</strain>
    </source>
</reference>
<comment type="function">
    <text evidence="1">ATPase subunit of a proteasome-like degradation complex; this subunit has chaperone activity. The binding of ATP and its subsequent hydrolysis by HslU are essential for unfolding of protein substrates subsequently hydrolyzed by HslV. HslU recognizes the N-terminal part of its protein substrates and unfolds these before they are guided to HslV for hydrolysis.</text>
</comment>
<comment type="subunit">
    <text evidence="1">A double ring-shaped homohexamer of HslV is capped on each side by a ring-shaped HslU homohexamer. The assembly of the HslU/HslV complex is dependent on binding of ATP.</text>
</comment>
<comment type="subcellular location">
    <subcellularLocation>
        <location evidence="1">Cytoplasm</location>
    </subcellularLocation>
</comment>
<comment type="similarity">
    <text evidence="1">Belongs to the ClpX chaperone family. HslU subfamily.</text>
</comment>
<gene>
    <name evidence="1" type="primary">hslU</name>
    <name type="ordered locus">Rleg2_3983</name>
</gene>
<proteinExistence type="inferred from homology"/>
<sequence length="435" mass="48017">MTTFSPREIVSELDRYIIGQHDAKRAVAIALRNRWRRQQLDPSLRDEVMPKNILMIGPTGVGKTEISRRLAKLAGAPFIKVEATKFTEVGYVGRDVEQIIRDLVEVGIGLVREKKRTEVQAKAHVSAEERVLDALVGTTASPATRESFRKKLRDGELDDKEIDIEVADAGSGMGGFEIPGMPGANIGVLNLSEMFGKAMGGRTKKVRTTVKASYTDLIRDESDKLIDNEVIQREAVRSTENDGIVFLDEIDKIAARDGGMGAGVSREGVQRDLLPLVEGTTVSTKYGPVKTDHILFIASGAFHVSKPSDLLPELQGRLPIRVELRPLNKEDFRRILTETEASLIRQYRALMETESLNLEFTDDAIDALADVAVHLNSSVENIGARRLQTVMERVLDDISYNAPDRGGTAVTIDAAYVREHVGDLAQNTDLSRFIL</sequence>